<proteinExistence type="inferred from homology"/>
<keyword id="KW-0687">Ribonucleoprotein</keyword>
<keyword id="KW-0689">Ribosomal protein</keyword>
<name>RS9_CLAM3</name>
<sequence length="161" mass="17364">MAQISDSLDVAPESFSTETPNEEAPKAPRAVLNVSGGAVGRRKQAIARVRLVPGSGSITVNGREFADYFPNKLHQQLVNDPFKVLDLLGSYDVVARISGGGPSGQAGALRLGIARALNEIDEENNRAVLKKNGFLSRDARVKERKKAGLKKARKAPQFSKR</sequence>
<feature type="chain" id="PRO_1000051203" description="Small ribosomal subunit protein uS9">
    <location>
        <begin position="1"/>
        <end position="161"/>
    </location>
</feature>
<feature type="region of interest" description="Disordered" evidence="2">
    <location>
        <begin position="1"/>
        <end position="27"/>
    </location>
</feature>
<feature type="region of interest" description="Disordered" evidence="2">
    <location>
        <begin position="142"/>
        <end position="161"/>
    </location>
</feature>
<evidence type="ECO:0000255" key="1">
    <source>
        <dbReference type="HAMAP-Rule" id="MF_00532"/>
    </source>
</evidence>
<evidence type="ECO:0000256" key="2">
    <source>
        <dbReference type="SAM" id="MobiDB-lite"/>
    </source>
</evidence>
<evidence type="ECO:0000305" key="3"/>
<comment type="similarity">
    <text evidence="1">Belongs to the universal ribosomal protein uS9 family.</text>
</comment>
<reference key="1">
    <citation type="journal article" date="2008" name="J. Bacteriol.">
        <title>The genome sequence of the tomato-pathogenic actinomycete Clavibacter michiganensis subsp. michiganensis NCPPB382 reveals a large island involved in pathogenicity.</title>
        <authorList>
            <person name="Gartemann K.-H."/>
            <person name="Abt B."/>
            <person name="Bekel T."/>
            <person name="Burger A."/>
            <person name="Engemann J."/>
            <person name="Fluegel M."/>
            <person name="Gaigalat L."/>
            <person name="Goesmann A."/>
            <person name="Graefen I."/>
            <person name="Kalinowski J."/>
            <person name="Kaup O."/>
            <person name="Kirchner O."/>
            <person name="Krause L."/>
            <person name="Linke B."/>
            <person name="McHardy A."/>
            <person name="Meyer F."/>
            <person name="Pohle S."/>
            <person name="Rueckert C."/>
            <person name="Schneiker S."/>
            <person name="Zellermann E.-M."/>
            <person name="Puehler A."/>
            <person name="Eichenlaub R."/>
            <person name="Kaiser O."/>
            <person name="Bartels D."/>
        </authorList>
    </citation>
    <scope>NUCLEOTIDE SEQUENCE [LARGE SCALE GENOMIC DNA]</scope>
    <source>
        <strain>NCPPB 382</strain>
    </source>
</reference>
<accession>A5CU75</accession>
<organism>
    <name type="scientific">Clavibacter michiganensis subsp. michiganensis (strain NCPPB 382)</name>
    <dbReference type="NCBI Taxonomy" id="443906"/>
    <lineage>
        <taxon>Bacteria</taxon>
        <taxon>Bacillati</taxon>
        <taxon>Actinomycetota</taxon>
        <taxon>Actinomycetes</taxon>
        <taxon>Micrococcales</taxon>
        <taxon>Microbacteriaceae</taxon>
        <taxon>Clavibacter</taxon>
    </lineage>
</organism>
<protein>
    <recommendedName>
        <fullName evidence="1">Small ribosomal subunit protein uS9</fullName>
    </recommendedName>
    <alternativeName>
        <fullName evidence="3">30S ribosomal protein S9</fullName>
    </alternativeName>
</protein>
<gene>
    <name evidence="1" type="primary">rpsI</name>
    <name type="ordered locus">CMM_2579</name>
</gene>
<dbReference type="EMBL" id="AM711867">
    <property type="protein sequence ID" value="CAN02662.1"/>
    <property type="molecule type" value="Genomic_DNA"/>
</dbReference>
<dbReference type="RefSeq" id="WP_012039268.1">
    <property type="nucleotide sequence ID" value="NC_009480.1"/>
</dbReference>
<dbReference type="SMR" id="A5CU75"/>
<dbReference type="GeneID" id="92984291"/>
<dbReference type="KEGG" id="cmi:CMM_2579"/>
<dbReference type="eggNOG" id="COG0103">
    <property type="taxonomic scope" value="Bacteria"/>
</dbReference>
<dbReference type="HOGENOM" id="CLU_046483_2_0_11"/>
<dbReference type="OrthoDB" id="9803965at2"/>
<dbReference type="Proteomes" id="UP000001564">
    <property type="component" value="Chromosome"/>
</dbReference>
<dbReference type="GO" id="GO:0005737">
    <property type="term" value="C:cytoplasm"/>
    <property type="evidence" value="ECO:0007669"/>
    <property type="project" value="UniProtKB-ARBA"/>
</dbReference>
<dbReference type="GO" id="GO:0015935">
    <property type="term" value="C:small ribosomal subunit"/>
    <property type="evidence" value="ECO:0007669"/>
    <property type="project" value="TreeGrafter"/>
</dbReference>
<dbReference type="GO" id="GO:0003723">
    <property type="term" value="F:RNA binding"/>
    <property type="evidence" value="ECO:0007669"/>
    <property type="project" value="TreeGrafter"/>
</dbReference>
<dbReference type="GO" id="GO:0003735">
    <property type="term" value="F:structural constituent of ribosome"/>
    <property type="evidence" value="ECO:0007669"/>
    <property type="project" value="InterPro"/>
</dbReference>
<dbReference type="GO" id="GO:0006412">
    <property type="term" value="P:translation"/>
    <property type="evidence" value="ECO:0007669"/>
    <property type="project" value="UniProtKB-UniRule"/>
</dbReference>
<dbReference type="FunFam" id="3.30.230.10:FF:000001">
    <property type="entry name" value="30S ribosomal protein S9"/>
    <property type="match status" value="1"/>
</dbReference>
<dbReference type="Gene3D" id="3.30.230.10">
    <property type="match status" value="1"/>
</dbReference>
<dbReference type="HAMAP" id="MF_00532_B">
    <property type="entry name" value="Ribosomal_uS9_B"/>
    <property type="match status" value="1"/>
</dbReference>
<dbReference type="InterPro" id="IPR020568">
    <property type="entry name" value="Ribosomal_Su5_D2-typ_SF"/>
</dbReference>
<dbReference type="InterPro" id="IPR000754">
    <property type="entry name" value="Ribosomal_uS9"/>
</dbReference>
<dbReference type="InterPro" id="IPR023035">
    <property type="entry name" value="Ribosomal_uS9_bac/plastid"/>
</dbReference>
<dbReference type="InterPro" id="IPR020574">
    <property type="entry name" value="Ribosomal_uS9_CS"/>
</dbReference>
<dbReference type="InterPro" id="IPR014721">
    <property type="entry name" value="Ribsml_uS5_D2-typ_fold_subgr"/>
</dbReference>
<dbReference type="NCBIfam" id="NF001099">
    <property type="entry name" value="PRK00132.1"/>
    <property type="match status" value="1"/>
</dbReference>
<dbReference type="PANTHER" id="PTHR21569">
    <property type="entry name" value="RIBOSOMAL PROTEIN S9"/>
    <property type="match status" value="1"/>
</dbReference>
<dbReference type="PANTHER" id="PTHR21569:SF1">
    <property type="entry name" value="SMALL RIBOSOMAL SUBUNIT PROTEIN US9M"/>
    <property type="match status" value="1"/>
</dbReference>
<dbReference type="Pfam" id="PF00380">
    <property type="entry name" value="Ribosomal_S9"/>
    <property type="match status" value="1"/>
</dbReference>
<dbReference type="SUPFAM" id="SSF54211">
    <property type="entry name" value="Ribosomal protein S5 domain 2-like"/>
    <property type="match status" value="1"/>
</dbReference>
<dbReference type="PROSITE" id="PS00360">
    <property type="entry name" value="RIBOSOMAL_S9"/>
    <property type="match status" value="1"/>
</dbReference>